<keyword id="KW-0285">Flavoprotein</keyword>
<keyword id="KW-0288">FMN</keyword>
<keyword id="KW-0521">NADP</keyword>
<keyword id="KW-0560">Oxidoreductase</keyword>
<keyword id="KW-1185">Reference proteome</keyword>
<keyword id="KW-0694">RNA-binding</keyword>
<keyword id="KW-0819">tRNA processing</keyword>
<keyword id="KW-0820">tRNA-binding</keyword>
<feature type="chain" id="PRO_0000162085" description="tRNA-dihydrouridine synthase B">
    <location>
        <begin position="1"/>
        <end position="321"/>
    </location>
</feature>
<feature type="active site" description="Proton donor" evidence="1">
    <location>
        <position position="100"/>
    </location>
</feature>
<feature type="binding site" evidence="1">
    <location>
        <begin position="16"/>
        <end position="18"/>
    </location>
    <ligand>
        <name>FMN</name>
        <dbReference type="ChEBI" id="CHEBI:58210"/>
    </ligand>
</feature>
<feature type="binding site" evidence="1">
    <location>
        <position position="70"/>
    </location>
    <ligand>
        <name>FMN</name>
        <dbReference type="ChEBI" id="CHEBI:58210"/>
    </ligand>
</feature>
<feature type="binding site" evidence="1">
    <location>
        <position position="139"/>
    </location>
    <ligand>
        <name>FMN</name>
        <dbReference type="ChEBI" id="CHEBI:58210"/>
    </ligand>
</feature>
<feature type="binding site" evidence="1">
    <location>
        <begin position="200"/>
        <end position="202"/>
    </location>
    <ligand>
        <name>FMN</name>
        <dbReference type="ChEBI" id="CHEBI:58210"/>
    </ligand>
</feature>
<feature type="binding site" evidence="1">
    <location>
        <begin position="224"/>
        <end position="225"/>
    </location>
    <ligand>
        <name>FMN</name>
        <dbReference type="ChEBI" id="CHEBI:58210"/>
    </ligand>
</feature>
<proteinExistence type="inferred from homology"/>
<accession>P0ABT7</accession>
<accession>P25717</accession>
<protein>
    <recommendedName>
        <fullName evidence="1">tRNA-dihydrouridine synthase B</fullName>
        <ecNumber evidence="1">1.3.1.-</ecNumber>
    </recommendedName>
</protein>
<evidence type="ECO:0000255" key="1">
    <source>
        <dbReference type="HAMAP-Rule" id="MF_02042"/>
    </source>
</evidence>
<gene>
    <name evidence="1" type="primary">dusB</name>
    <name type="ordered locus">Z4620</name>
    <name type="ordered locus">ECs4132</name>
</gene>
<sequence>MRIGQYQLRNRLIAAPMAGITDRPFRTLCYEMGAGLTVSEMMSSNPQVWESDKSRLRMVHIDEPGIRTVQIAGSDPKEMADAARINVESGAQIIDINMGCPAKKVNRKLAGSALLQYPDVVKSILTEVVNAVDVPVTLKIRTGWAPEHRNCEEIAQLAEDCGIQALTIHGRTRACLFNGEAEYDSIRAVKQKVSIPVIANGDITDPLKARAVLDYTGADALMIGRAAQGRPWIFREIQHYLDTGELLPPLPLAEVKRLLCAHVRELHDFYGPAKGYRIARKHVSWYLQEHAPNDQFRRTFNAIEDASEQLEALEAYFENFA</sequence>
<organism>
    <name type="scientific">Escherichia coli O157:H7</name>
    <dbReference type="NCBI Taxonomy" id="83334"/>
    <lineage>
        <taxon>Bacteria</taxon>
        <taxon>Pseudomonadati</taxon>
        <taxon>Pseudomonadota</taxon>
        <taxon>Gammaproteobacteria</taxon>
        <taxon>Enterobacterales</taxon>
        <taxon>Enterobacteriaceae</taxon>
        <taxon>Escherichia</taxon>
    </lineage>
</organism>
<reference key="1">
    <citation type="journal article" date="2001" name="Nature">
        <title>Genome sequence of enterohaemorrhagic Escherichia coli O157:H7.</title>
        <authorList>
            <person name="Perna N.T."/>
            <person name="Plunkett G. III"/>
            <person name="Burland V."/>
            <person name="Mau B."/>
            <person name="Glasner J.D."/>
            <person name="Rose D.J."/>
            <person name="Mayhew G.F."/>
            <person name="Evans P.S."/>
            <person name="Gregor J."/>
            <person name="Kirkpatrick H.A."/>
            <person name="Posfai G."/>
            <person name="Hackett J."/>
            <person name="Klink S."/>
            <person name="Boutin A."/>
            <person name="Shao Y."/>
            <person name="Miller L."/>
            <person name="Grotbeck E.J."/>
            <person name="Davis N.W."/>
            <person name="Lim A."/>
            <person name="Dimalanta E.T."/>
            <person name="Potamousis K."/>
            <person name="Apodaca J."/>
            <person name="Anantharaman T.S."/>
            <person name="Lin J."/>
            <person name="Yen G."/>
            <person name="Schwartz D.C."/>
            <person name="Welch R.A."/>
            <person name="Blattner F.R."/>
        </authorList>
    </citation>
    <scope>NUCLEOTIDE SEQUENCE [LARGE SCALE GENOMIC DNA]</scope>
    <source>
        <strain>O157:H7 / EDL933 / ATCC 700927 / EHEC</strain>
    </source>
</reference>
<reference key="2">
    <citation type="journal article" date="2001" name="DNA Res.">
        <title>Complete genome sequence of enterohemorrhagic Escherichia coli O157:H7 and genomic comparison with a laboratory strain K-12.</title>
        <authorList>
            <person name="Hayashi T."/>
            <person name="Makino K."/>
            <person name="Ohnishi M."/>
            <person name="Kurokawa K."/>
            <person name="Ishii K."/>
            <person name="Yokoyama K."/>
            <person name="Han C.-G."/>
            <person name="Ohtsubo E."/>
            <person name="Nakayama K."/>
            <person name="Murata T."/>
            <person name="Tanaka M."/>
            <person name="Tobe T."/>
            <person name="Iida T."/>
            <person name="Takami H."/>
            <person name="Honda T."/>
            <person name="Sasakawa C."/>
            <person name="Ogasawara N."/>
            <person name="Yasunaga T."/>
            <person name="Kuhara S."/>
            <person name="Shiba T."/>
            <person name="Hattori M."/>
            <person name="Shinagawa H."/>
        </authorList>
    </citation>
    <scope>NUCLEOTIDE SEQUENCE [LARGE SCALE GENOMIC DNA]</scope>
    <source>
        <strain>O157:H7 / Sakai / RIMD 0509952 / EHEC</strain>
    </source>
</reference>
<comment type="function">
    <text evidence="1">Catalyzes the synthesis of 5,6-dihydrouridine (D), a modified base found in the D-loop of most tRNAs, via the reduction of the C5-C6 double bond in target uridines.</text>
</comment>
<comment type="catalytic activity">
    <reaction evidence="1">
        <text>a 5,6-dihydrouridine in tRNA + NAD(+) = a uridine in tRNA + NADH + H(+)</text>
        <dbReference type="Rhea" id="RHEA:54452"/>
        <dbReference type="Rhea" id="RHEA-COMP:13339"/>
        <dbReference type="Rhea" id="RHEA-COMP:13887"/>
        <dbReference type="ChEBI" id="CHEBI:15378"/>
        <dbReference type="ChEBI" id="CHEBI:57540"/>
        <dbReference type="ChEBI" id="CHEBI:57945"/>
        <dbReference type="ChEBI" id="CHEBI:65315"/>
        <dbReference type="ChEBI" id="CHEBI:74443"/>
    </reaction>
</comment>
<comment type="catalytic activity">
    <reaction evidence="1">
        <text>a 5,6-dihydrouridine in tRNA + NADP(+) = a uridine in tRNA + NADPH + H(+)</text>
        <dbReference type="Rhea" id="RHEA:23624"/>
        <dbReference type="Rhea" id="RHEA-COMP:13339"/>
        <dbReference type="Rhea" id="RHEA-COMP:13887"/>
        <dbReference type="ChEBI" id="CHEBI:15378"/>
        <dbReference type="ChEBI" id="CHEBI:57783"/>
        <dbReference type="ChEBI" id="CHEBI:58349"/>
        <dbReference type="ChEBI" id="CHEBI:65315"/>
        <dbReference type="ChEBI" id="CHEBI:74443"/>
    </reaction>
</comment>
<comment type="cofactor">
    <cofactor evidence="1">
        <name>FMN</name>
        <dbReference type="ChEBI" id="CHEBI:58210"/>
    </cofactor>
</comment>
<comment type="similarity">
    <text evidence="1">Belongs to the Dus family. DusB subfamily.</text>
</comment>
<dbReference type="EC" id="1.3.1.-" evidence="1"/>
<dbReference type="EMBL" id="AE005174">
    <property type="protein sequence ID" value="AAG58388.1"/>
    <property type="molecule type" value="Genomic_DNA"/>
</dbReference>
<dbReference type="EMBL" id="BA000007">
    <property type="protein sequence ID" value="BAB37555.1"/>
    <property type="molecule type" value="Genomic_DNA"/>
</dbReference>
<dbReference type="PIR" id="D91145">
    <property type="entry name" value="D91145"/>
</dbReference>
<dbReference type="PIR" id="H85990">
    <property type="entry name" value="H85990"/>
</dbReference>
<dbReference type="RefSeq" id="NP_312159.1">
    <property type="nucleotide sequence ID" value="NC_002695.1"/>
</dbReference>
<dbReference type="RefSeq" id="WP_001219652.1">
    <property type="nucleotide sequence ID" value="NZ_VOAI01000014.1"/>
</dbReference>
<dbReference type="SMR" id="P0ABT7"/>
<dbReference type="STRING" id="155864.Z4620"/>
<dbReference type="GeneID" id="916020"/>
<dbReference type="GeneID" id="93778727"/>
<dbReference type="KEGG" id="ece:Z4620"/>
<dbReference type="KEGG" id="ecs:ECs_4132"/>
<dbReference type="PATRIC" id="fig|386585.9.peg.4315"/>
<dbReference type="eggNOG" id="COG0042">
    <property type="taxonomic scope" value="Bacteria"/>
</dbReference>
<dbReference type="HOGENOM" id="CLU_013299_0_1_6"/>
<dbReference type="OMA" id="QRPHHDI"/>
<dbReference type="Proteomes" id="UP000000558">
    <property type="component" value="Chromosome"/>
</dbReference>
<dbReference type="Proteomes" id="UP000002519">
    <property type="component" value="Chromosome"/>
</dbReference>
<dbReference type="GO" id="GO:0050660">
    <property type="term" value="F:flavin adenine dinucleotide binding"/>
    <property type="evidence" value="ECO:0007669"/>
    <property type="project" value="InterPro"/>
</dbReference>
<dbReference type="GO" id="GO:0010181">
    <property type="term" value="F:FMN binding"/>
    <property type="evidence" value="ECO:0007669"/>
    <property type="project" value="UniProtKB-UniRule"/>
</dbReference>
<dbReference type="GO" id="GO:0000049">
    <property type="term" value="F:tRNA binding"/>
    <property type="evidence" value="ECO:0007669"/>
    <property type="project" value="UniProtKB-UniRule"/>
</dbReference>
<dbReference type="GO" id="GO:0017150">
    <property type="term" value="F:tRNA dihydrouridine synthase activity"/>
    <property type="evidence" value="ECO:0007669"/>
    <property type="project" value="UniProtKB-UniRule"/>
</dbReference>
<dbReference type="CDD" id="cd02801">
    <property type="entry name" value="DUS_like_FMN"/>
    <property type="match status" value="1"/>
</dbReference>
<dbReference type="FunFam" id="1.10.1200.80:FF:000001">
    <property type="entry name" value="tRNA-dihydrouridine synthase B"/>
    <property type="match status" value="1"/>
</dbReference>
<dbReference type="FunFam" id="3.20.20.70:FF:000051">
    <property type="entry name" value="tRNA-dihydrouridine synthase B"/>
    <property type="match status" value="1"/>
</dbReference>
<dbReference type="Gene3D" id="3.20.20.70">
    <property type="entry name" value="Aldolase class I"/>
    <property type="match status" value="1"/>
</dbReference>
<dbReference type="Gene3D" id="1.10.1200.80">
    <property type="entry name" value="Putative flavin oxidoreducatase, domain 2"/>
    <property type="match status" value="1"/>
</dbReference>
<dbReference type="HAMAP" id="MF_02042">
    <property type="entry name" value="DusB_subfam"/>
    <property type="match status" value="1"/>
</dbReference>
<dbReference type="InterPro" id="IPR013785">
    <property type="entry name" value="Aldolase_TIM"/>
</dbReference>
<dbReference type="InterPro" id="IPR035587">
    <property type="entry name" value="DUS-like_FMN-bd"/>
</dbReference>
<dbReference type="InterPro" id="IPR001269">
    <property type="entry name" value="DUS_fam"/>
</dbReference>
<dbReference type="InterPro" id="IPR032887">
    <property type="entry name" value="DusB"/>
</dbReference>
<dbReference type="InterPro" id="IPR004652">
    <property type="entry name" value="DusB-like"/>
</dbReference>
<dbReference type="InterPro" id="IPR024036">
    <property type="entry name" value="tRNA-dHydroUridine_Synthase_C"/>
</dbReference>
<dbReference type="InterPro" id="IPR018517">
    <property type="entry name" value="tRNA_hU_synthase_CS"/>
</dbReference>
<dbReference type="NCBIfam" id="TIGR00737">
    <property type="entry name" value="nifR3_yhdG"/>
    <property type="match status" value="1"/>
</dbReference>
<dbReference type="PANTHER" id="PTHR45846">
    <property type="entry name" value="TRNA-DIHYDROURIDINE(47) SYNTHASE [NAD(P)(+)]-LIKE"/>
    <property type="match status" value="1"/>
</dbReference>
<dbReference type="PANTHER" id="PTHR45846:SF1">
    <property type="entry name" value="TRNA-DIHYDROURIDINE(47) SYNTHASE [NAD(P)(+)]-LIKE"/>
    <property type="match status" value="1"/>
</dbReference>
<dbReference type="Pfam" id="PF01207">
    <property type="entry name" value="Dus"/>
    <property type="match status" value="1"/>
</dbReference>
<dbReference type="PIRSF" id="PIRSF006621">
    <property type="entry name" value="Dus"/>
    <property type="match status" value="1"/>
</dbReference>
<dbReference type="SUPFAM" id="SSF51395">
    <property type="entry name" value="FMN-linked oxidoreductases"/>
    <property type="match status" value="1"/>
</dbReference>
<dbReference type="PROSITE" id="PS01136">
    <property type="entry name" value="UPF0034"/>
    <property type="match status" value="1"/>
</dbReference>
<name>DUSB_ECO57</name>